<organism>
    <name type="scientific">Arabidopsis thaliana</name>
    <name type="common">Mouse-ear cress</name>
    <dbReference type="NCBI Taxonomy" id="3702"/>
    <lineage>
        <taxon>Eukaryota</taxon>
        <taxon>Viridiplantae</taxon>
        <taxon>Streptophyta</taxon>
        <taxon>Embryophyta</taxon>
        <taxon>Tracheophyta</taxon>
        <taxon>Spermatophyta</taxon>
        <taxon>Magnoliopsida</taxon>
        <taxon>eudicotyledons</taxon>
        <taxon>Gunneridae</taxon>
        <taxon>Pentapetalae</taxon>
        <taxon>rosids</taxon>
        <taxon>malvids</taxon>
        <taxon>Brassicales</taxon>
        <taxon>Brassicaceae</taxon>
        <taxon>Camelineae</taxon>
        <taxon>Arabidopsis</taxon>
    </lineage>
</organism>
<proteinExistence type="evidence at transcript level"/>
<evidence type="ECO:0000250" key="1">
    <source>
        <dbReference type="UniProtKB" id="Q94AG2"/>
    </source>
</evidence>
<evidence type="ECO:0000250" key="2">
    <source>
        <dbReference type="UniProtKB" id="Q94F62"/>
    </source>
</evidence>
<evidence type="ECO:0000255" key="3"/>
<evidence type="ECO:0000255" key="4">
    <source>
        <dbReference type="PROSITE-ProRule" id="PRU00159"/>
    </source>
</evidence>
<evidence type="ECO:0000256" key="5">
    <source>
        <dbReference type="SAM" id="MobiDB-lite"/>
    </source>
</evidence>
<evidence type="ECO:0000305" key="6"/>
<gene>
    <name type="ordered locus">At4g34220</name>
    <name type="ORF">F10M10.12</name>
    <name type="ORF">F28A23_20</name>
</gene>
<dbReference type="EMBL" id="AL021961">
    <property type="protein sequence ID" value="CAA17550.1"/>
    <property type="status" value="ALT_SEQ"/>
    <property type="molecule type" value="Genomic_DNA"/>
</dbReference>
<dbReference type="EMBL" id="AL161585">
    <property type="protein sequence ID" value="CAB80139.1"/>
    <property type="status" value="ALT_SEQ"/>
    <property type="molecule type" value="Genomic_DNA"/>
</dbReference>
<dbReference type="EMBL" id="CP002687">
    <property type="protein sequence ID" value="AEE86343.1"/>
    <property type="molecule type" value="Genomic_DNA"/>
</dbReference>
<dbReference type="EMBL" id="AY035109">
    <property type="protein sequence ID" value="AAK59614.1"/>
    <property type="molecule type" value="mRNA"/>
</dbReference>
<dbReference type="EMBL" id="AY113903">
    <property type="protein sequence ID" value="AAM44951.1"/>
    <property type="molecule type" value="mRNA"/>
</dbReference>
<dbReference type="PIR" id="T05414">
    <property type="entry name" value="T05414"/>
</dbReference>
<dbReference type="RefSeq" id="NP_567961.1">
    <property type="nucleotide sequence ID" value="NM_119586.3"/>
</dbReference>
<dbReference type="SMR" id="Q94C77"/>
<dbReference type="BioGRID" id="14853">
    <property type="interactions" value="44"/>
</dbReference>
<dbReference type="FunCoup" id="Q94C77">
    <property type="interactions" value="247"/>
</dbReference>
<dbReference type="IntAct" id="Q94C77">
    <property type="interactions" value="43"/>
</dbReference>
<dbReference type="STRING" id="3702.Q94C77"/>
<dbReference type="GlyGen" id="Q94C77">
    <property type="glycosylation" value="1 site"/>
</dbReference>
<dbReference type="iPTMnet" id="Q94C77"/>
<dbReference type="PaxDb" id="3702-AT4G34220.1"/>
<dbReference type="ProteomicsDB" id="227960"/>
<dbReference type="EnsemblPlants" id="AT4G34220.1">
    <property type="protein sequence ID" value="AT4G34220.1"/>
    <property type="gene ID" value="AT4G34220"/>
</dbReference>
<dbReference type="GeneID" id="829571"/>
<dbReference type="Gramene" id="AT4G34220.1">
    <property type="protein sequence ID" value="AT4G34220.1"/>
    <property type="gene ID" value="AT4G34220"/>
</dbReference>
<dbReference type="KEGG" id="ath:AT4G34220"/>
<dbReference type="Araport" id="AT4G34220"/>
<dbReference type="TAIR" id="AT4G34220">
    <property type="gene designation" value="RDK1"/>
</dbReference>
<dbReference type="eggNOG" id="ENOG502QRF8">
    <property type="taxonomic scope" value="Eukaryota"/>
</dbReference>
<dbReference type="HOGENOM" id="CLU_000288_92_6_1"/>
<dbReference type="InParanoid" id="Q94C77"/>
<dbReference type="OMA" id="PYQPPEW"/>
<dbReference type="PhylomeDB" id="Q94C77"/>
<dbReference type="PRO" id="PR:Q94C77"/>
<dbReference type="Proteomes" id="UP000006548">
    <property type="component" value="Chromosome 4"/>
</dbReference>
<dbReference type="ExpressionAtlas" id="Q94C77">
    <property type="expression patterns" value="baseline and differential"/>
</dbReference>
<dbReference type="GO" id="GO:0005886">
    <property type="term" value="C:plasma membrane"/>
    <property type="evidence" value="ECO:0000314"/>
    <property type="project" value="TAIR"/>
</dbReference>
<dbReference type="GO" id="GO:0005524">
    <property type="term" value="F:ATP binding"/>
    <property type="evidence" value="ECO:0007669"/>
    <property type="project" value="InterPro"/>
</dbReference>
<dbReference type="GO" id="GO:0042631">
    <property type="term" value="P:cellular response to water deprivation"/>
    <property type="evidence" value="ECO:0000315"/>
    <property type="project" value="TAIR"/>
</dbReference>
<dbReference type="GO" id="GO:0009789">
    <property type="term" value="P:positive regulation of abscisic acid-activated signaling pathway"/>
    <property type="evidence" value="ECO:0000315"/>
    <property type="project" value="TAIR"/>
</dbReference>
<dbReference type="GO" id="GO:0010030">
    <property type="term" value="P:positive regulation of seed germination"/>
    <property type="evidence" value="ECO:0000315"/>
    <property type="project" value="TAIR"/>
</dbReference>
<dbReference type="CDD" id="cd14066">
    <property type="entry name" value="STKc_IRAK"/>
    <property type="match status" value="1"/>
</dbReference>
<dbReference type="FunFam" id="1.10.510.10:FF:001884">
    <property type="entry name" value="Leucine-rich repeat receptor-like protein kinase"/>
    <property type="match status" value="1"/>
</dbReference>
<dbReference type="FunFam" id="3.80.10.10:FF:000722">
    <property type="entry name" value="Leucine-rich repeat receptor-like protein kinase"/>
    <property type="match status" value="1"/>
</dbReference>
<dbReference type="FunFam" id="3.80.10.10:FF:001134">
    <property type="entry name" value="Leucine-rich repeat receptor-like protein kinase"/>
    <property type="match status" value="1"/>
</dbReference>
<dbReference type="Gene3D" id="3.30.200.20">
    <property type="entry name" value="Phosphorylase Kinase, domain 1"/>
    <property type="match status" value="1"/>
</dbReference>
<dbReference type="Gene3D" id="3.80.10.10">
    <property type="entry name" value="Ribonuclease Inhibitor"/>
    <property type="match status" value="2"/>
</dbReference>
<dbReference type="Gene3D" id="1.10.510.10">
    <property type="entry name" value="Transferase(Phosphotransferase) domain 1"/>
    <property type="match status" value="1"/>
</dbReference>
<dbReference type="InterPro" id="IPR011009">
    <property type="entry name" value="Kinase-like_dom_sf"/>
</dbReference>
<dbReference type="InterPro" id="IPR001611">
    <property type="entry name" value="Leu-rich_rpt"/>
</dbReference>
<dbReference type="InterPro" id="IPR032675">
    <property type="entry name" value="LRR_dom_sf"/>
</dbReference>
<dbReference type="InterPro" id="IPR013210">
    <property type="entry name" value="LRR_N_plant-typ"/>
</dbReference>
<dbReference type="InterPro" id="IPR046959">
    <property type="entry name" value="PRK1-6/SRF4-like"/>
</dbReference>
<dbReference type="InterPro" id="IPR000719">
    <property type="entry name" value="Prot_kinase_dom"/>
</dbReference>
<dbReference type="PANTHER" id="PTHR48007">
    <property type="entry name" value="LEUCINE-RICH REPEAT RECEPTOR-LIKE PROTEIN KINASE PXC1"/>
    <property type="match status" value="1"/>
</dbReference>
<dbReference type="PANTHER" id="PTHR48007:SF47">
    <property type="entry name" value="PROTEIN KINASE DOMAIN-CONTAINING PROTEIN"/>
    <property type="match status" value="1"/>
</dbReference>
<dbReference type="Pfam" id="PF00560">
    <property type="entry name" value="LRR_1"/>
    <property type="match status" value="4"/>
</dbReference>
<dbReference type="Pfam" id="PF08263">
    <property type="entry name" value="LRRNT_2"/>
    <property type="match status" value="1"/>
</dbReference>
<dbReference type="Pfam" id="PF00069">
    <property type="entry name" value="Pkinase"/>
    <property type="match status" value="1"/>
</dbReference>
<dbReference type="SUPFAM" id="SSF52058">
    <property type="entry name" value="L domain-like"/>
    <property type="match status" value="1"/>
</dbReference>
<dbReference type="SUPFAM" id="SSF56112">
    <property type="entry name" value="Protein kinase-like (PK-like)"/>
    <property type="match status" value="1"/>
</dbReference>
<dbReference type="PROSITE" id="PS50011">
    <property type="entry name" value="PROTEIN_KINASE_DOM"/>
    <property type="match status" value="1"/>
</dbReference>
<protein>
    <recommendedName>
        <fullName>Receptor protein kinase-like protein At4g34220</fullName>
    </recommendedName>
</protein>
<keyword id="KW-0433">Leucine-rich repeat</keyword>
<keyword id="KW-0472">Membrane</keyword>
<keyword id="KW-0597">Phosphoprotein</keyword>
<keyword id="KW-1185">Reference proteome</keyword>
<keyword id="KW-0677">Repeat</keyword>
<keyword id="KW-0732">Signal</keyword>
<keyword id="KW-0812">Transmembrane</keyword>
<keyword id="KW-1133">Transmembrane helix</keyword>
<sequence length="757" mass="82602">MTSNRSNLLFSLVLFHFLFVPTQLQALNTDGVLLLTFKYSILTDPLSVLRNWNYDDATPCLWTGVTCTELGKPNTPDMFRVTSLVLPNKHLLGSITPDLFSIPYLRILDLSSNFFNGSLPDSVFNATELQSISLGSNNLSGDLPKSVNSVTNLQLLNLSANAFTGEIPLNISLLKNLTVVSLSKNTFSGDIPSGFEAAQILDLSSNLLNGSLPKDLGGKSLHYLNLSHNKVLGEISPNFAEKFPANATVDLSFNNLTGPIPSSLSLLNQKAESFSGNQELCGKPLKILCSIPSTLSNPPNISETTSPAIAVKPRSTAPINPLTEKPNQTGKSKLKPSTIAAITVADIVGLAFIGLLVLYVYQVRKRRRYPESSKFSFFKFCLEKNEAKKSKPSTTEVTVPESPEAKTTCGSCIILTGGRYDETSTSESDVENQQTVQAFTRTDGGQLKQSSQTQLVTVDGETRLDLDTLLKASAYILGTTGTGIVYKAVLENGTAFAVRRIETESCAAAKPKEFEREVRAIAKLRHPNLVRIRGFCWGDDEKLLISDYVPNGSLLCFFTATKASSSSSSSSSLQNPLTFEARLKIARGMARGLSYINEKKQVHGNIKPNNILLNAENEPIITDLGLDRLMTPARESHTTGPTSSSPYQPPEWSTSLKPNPKWDVYSFGVILLELLTSKVFSVDHDIDQFSNLSDSAAEENGRFLRLIDGAIRSDVARHEDAAMACFRLGIECVSSLPQKRPSMKELVQVLEKICVLV</sequence>
<accession>Q94C77</accession>
<accession>O49483</accession>
<feature type="signal peptide" evidence="3">
    <location>
        <begin position="1"/>
        <end position="26"/>
    </location>
</feature>
<feature type="chain" id="PRO_0000239081" description="Receptor protein kinase-like protein At4g34220">
    <location>
        <begin position="27"/>
        <end position="757"/>
    </location>
</feature>
<feature type="transmembrane region" description="Helical" evidence="3">
    <location>
        <begin position="339"/>
        <end position="359"/>
    </location>
</feature>
<feature type="repeat" description="LRR 1">
    <location>
        <begin position="104"/>
        <end position="126"/>
    </location>
</feature>
<feature type="repeat" description="LRR 2">
    <location>
        <begin position="128"/>
        <end position="150"/>
    </location>
</feature>
<feature type="repeat" description="LRR 3">
    <location>
        <begin position="152"/>
        <end position="174"/>
    </location>
</feature>
<feature type="repeat" description="LRR 4">
    <location>
        <begin position="176"/>
        <end position="198"/>
    </location>
</feature>
<feature type="repeat" description="LRR 5">
    <location>
        <begin position="199"/>
        <end position="219"/>
    </location>
</feature>
<feature type="repeat" description="LRR 6">
    <location>
        <begin position="220"/>
        <end position="242"/>
    </location>
</feature>
<feature type="repeat" description="LRR 7">
    <location>
        <begin position="245"/>
        <end position="267"/>
    </location>
</feature>
<feature type="domain" description="Protein kinase" evidence="4">
    <location>
        <begin position="471"/>
        <end position="753"/>
    </location>
</feature>
<feature type="region of interest" description="Disordered" evidence="5">
    <location>
        <begin position="633"/>
        <end position="654"/>
    </location>
</feature>
<feature type="compositionally biased region" description="Polar residues" evidence="5">
    <location>
        <begin position="638"/>
        <end position="654"/>
    </location>
</feature>
<feature type="modified residue" description="Phosphoserine" evidence="2">
    <location>
        <position position="473"/>
    </location>
</feature>
<feature type="modified residue" description="Phosphothreonine" evidence="2">
    <location>
        <position position="494"/>
    </location>
</feature>
<feature type="modified residue" description="Phosphoserine" evidence="1">
    <location>
        <position position="553"/>
    </location>
</feature>
<feature type="modified residue" description="Phosphothreonine" evidence="2">
    <location>
        <position position="638"/>
    </location>
</feature>
<feature type="modified residue" description="Phosphothreonine" evidence="2">
    <location>
        <position position="639"/>
    </location>
</feature>
<reference key="1">
    <citation type="journal article" date="1999" name="Nature">
        <title>Sequence and analysis of chromosome 4 of the plant Arabidopsis thaliana.</title>
        <authorList>
            <person name="Mayer K.F.X."/>
            <person name="Schueller C."/>
            <person name="Wambutt R."/>
            <person name="Murphy G."/>
            <person name="Volckaert G."/>
            <person name="Pohl T."/>
            <person name="Duesterhoeft A."/>
            <person name="Stiekema W."/>
            <person name="Entian K.-D."/>
            <person name="Terryn N."/>
            <person name="Harris B."/>
            <person name="Ansorge W."/>
            <person name="Brandt P."/>
            <person name="Grivell L.A."/>
            <person name="Rieger M."/>
            <person name="Weichselgartner M."/>
            <person name="de Simone V."/>
            <person name="Obermaier B."/>
            <person name="Mache R."/>
            <person name="Mueller M."/>
            <person name="Kreis M."/>
            <person name="Delseny M."/>
            <person name="Puigdomenech P."/>
            <person name="Watson M."/>
            <person name="Schmidtheini T."/>
            <person name="Reichert B."/>
            <person name="Portetelle D."/>
            <person name="Perez-Alonso M."/>
            <person name="Boutry M."/>
            <person name="Bancroft I."/>
            <person name="Vos P."/>
            <person name="Hoheisel J."/>
            <person name="Zimmermann W."/>
            <person name="Wedler H."/>
            <person name="Ridley P."/>
            <person name="Langham S.-A."/>
            <person name="McCullagh B."/>
            <person name="Bilham L."/>
            <person name="Robben J."/>
            <person name="van der Schueren J."/>
            <person name="Grymonprez B."/>
            <person name="Chuang Y.-J."/>
            <person name="Vandenbussche F."/>
            <person name="Braeken M."/>
            <person name="Weltjens I."/>
            <person name="Voet M."/>
            <person name="Bastiaens I."/>
            <person name="Aert R."/>
            <person name="Defoor E."/>
            <person name="Weitzenegger T."/>
            <person name="Bothe G."/>
            <person name="Ramsperger U."/>
            <person name="Hilbert H."/>
            <person name="Braun M."/>
            <person name="Holzer E."/>
            <person name="Brandt A."/>
            <person name="Peters S."/>
            <person name="van Staveren M."/>
            <person name="Dirkse W."/>
            <person name="Mooijman P."/>
            <person name="Klein Lankhorst R."/>
            <person name="Rose M."/>
            <person name="Hauf J."/>
            <person name="Koetter P."/>
            <person name="Berneiser S."/>
            <person name="Hempel S."/>
            <person name="Feldpausch M."/>
            <person name="Lamberth S."/>
            <person name="Van den Daele H."/>
            <person name="De Keyser A."/>
            <person name="Buysshaert C."/>
            <person name="Gielen J."/>
            <person name="Villarroel R."/>
            <person name="De Clercq R."/>
            <person name="van Montagu M."/>
            <person name="Rogers J."/>
            <person name="Cronin A."/>
            <person name="Quail M.A."/>
            <person name="Bray-Allen S."/>
            <person name="Clark L."/>
            <person name="Doggett J."/>
            <person name="Hall S."/>
            <person name="Kay M."/>
            <person name="Lennard N."/>
            <person name="McLay K."/>
            <person name="Mayes R."/>
            <person name="Pettett A."/>
            <person name="Rajandream M.A."/>
            <person name="Lyne M."/>
            <person name="Benes V."/>
            <person name="Rechmann S."/>
            <person name="Borkova D."/>
            <person name="Bloecker H."/>
            <person name="Scharfe M."/>
            <person name="Grimm M."/>
            <person name="Loehnert T.-H."/>
            <person name="Dose S."/>
            <person name="de Haan M."/>
            <person name="Maarse A.C."/>
            <person name="Schaefer M."/>
            <person name="Mueller-Auer S."/>
            <person name="Gabel C."/>
            <person name="Fuchs M."/>
            <person name="Fartmann B."/>
            <person name="Granderath K."/>
            <person name="Dauner D."/>
            <person name="Herzl A."/>
            <person name="Neumann S."/>
            <person name="Argiriou A."/>
            <person name="Vitale D."/>
            <person name="Liguori R."/>
            <person name="Piravandi E."/>
            <person name="Massenet O."/>
            <person name="Quigley F."/>
            <person name="Clabauld G."/>
            <person name="Muendlein A."/>
            <person name="Felber R."/>
            <person name="Schnabl S."/>
            <person name="Hiller R."/>
            <person name="Schmidt W."/>
            <person name="Lecharny A."/>
            <person name="Aubourg S."/>
            <person name="Chefdor F."/>
            <person name="Cooke R."/>
            <person name="Berger C."/>
            <person name="Monfort A."/>
            <person name="Casacuberta E."/>
            <person name="Gibbons T."/>
            <person name="Weber N."/>
            <person name="Vandenbol M."/>
            <person name="Bargues M."/>
            <person name="Terol J."/>
            <person name="Torres A."/>
            <person name="Perez-Perez A."/>
            <person name="Purnelle B."/>
            <person name="Bent E."/>
            <person name="Johnson S."/>
            <person name="Tacon D."/>
            <person name="Jesse T."/>
            <person name="Heijnen L."/>
            <person name="Schwarz S."/>
            <person name="Scholler P."/>
            <person name="Heber S."/>
            <person name="Francs P."/>
            <person name="Bielke C."/>
            <person name="Frishman D."/>
            <person name="Haase D."/>
            <person name="Lemcke K."/>
            <person name="Mewes H.-W."/>
            <person name="Stocker S."/>
            <person name="Zaccaria P."/>
            <person name="Bevan M."/>
            <person name="Wilson R.K."/>
            <person name="de la Bastide M."/>
            <person name="Habermann K."/>
            <person name="Parnell L."/>
            <person name="Dedhia N."/>
            <person name="Gnoj L."/>
            <person name="Schutz K."/>
            <person name="Huang E."/>
            <person name="Spiegel L."/>
            <person name="Sekhon M."/>
            <person name="Murray J."/>
            <person name="Sheet P."/>
            <person name="Cordes M."/>
            <person name="Abu-Threideh J."/>
            <person name="Stoneking T."/>
            <person name="Kalicki J."/>
            <person name="Graves T."/>
            <person name="Harmon G."/>
            <person name="Edwards J."/>
            <person name="Latreille P."/>
            <person name="Courtney L."/>
            <person name="Cloud J."/>
            <person name="Abbott A."/>
            <person name="Scott K."/>
            <person name="Johnson D."/>
            <person name="Minx P."/>
            <person name="Bentley D."/>
            <person name="Fulton B."/>
            <person name="Miller N."/>
            <person name="Greco T."/>
            <person name="Kemp K."/>
            <person name="Kramer J."/>
            <person name="Fulton L."/>
            <person name="Mardis E."/>
            <person name="Dante M."/>
            <person name="Pepin K."/>
            <person name="Hillier L.W."/>
            <person name="Nelson J."/>
            <person name="Spieth J."/>
            <person name="Ryan E."/>
            <person name="Andrews S."/>
            <person name="Geisel C."/>
            <person name="Layman D."/>
            <person name="Du H."/>
            <person name="Ali J."/>
            <person name="Berghoff A."/>
            <person name="Jones K."/>
            <person name="Drone K."/>
            <person name="Cotton M."/>
            <person name="Joshu C."/>
            <person name="Antonoiu B."/>
            <person name="Zidanic M."/>
            <person name="Strong C."/>
            <person name="Sun H."/>
            <person name="Lamar B."/>
            <person name="Yordan C."/>
            <person name="Ma P."/>
            <person name="Zhong J."/>
            <person name="Preston R."/>
            <person name="Vil D."/>
            <person name="Shekher M."/>
            <person name="Matero A."/>
            <person name="Shah R."/>
            <person name="Swaby I.K."/>
            <person name="O'Shaughnessy A."/>
            <person name="Rodriguez M."/>
            <person name="Hoffman J."/>
            <person name="Till S."/>
            <person name="Granat S."/>
            <person name="Shohdy N."/>
            <person name="Hasegawa A."/>
            <person name="Hameed A."/>
            <person name="Lodhi M."/>
            <person name="Johnson A."/>
            <person name="Chen E."/>
            <person name="Marra M.A."/>
            <person name="Martienssen R."/>
            <person name="McCombie W.R."/>
        </authorList>
    </citation>
    <scope>NUCLEOTIDE SEQUENCE [LARGE SCALE GENOMIC DNA]</scope>
    <source>
        <strain>cv. Columbia</strain>
    </source>
</reference>
<reference key="2">
    <citation type="journal article" date="2017" name="Plant J.">
        <title>Araport11: a complete reannotation of the Arabidopsis thaliana reference genome.</title>
        <authorList>
            <person name="Cheng C.Y."/>
            <person name="Krishnakumar V."/>
            <person name="Chan A.P."/>
            <person name="Thibaud-Nissen F."/>
            <person name="Schobel S."/>
            <person name="Town C.D."/>
        </authorList>
    </citation>
    <scope>GENOME REANNOTATION</scope>
    <source>
        <strain>cv. Columbia</strain>
    </source>
</reference>
<reference key="3">
    <citation type="journal article" date="2003" name="Science">
        <title>Empirical analysis of transcriptional activity in the Arabidopsis genome.</title>
        <authorList>
            <person name="Yamada K."/>
            <person name="Lim J."/>
            <person name="Dale J.M."/>
            <person name="Chen H."/>
            <person name="Shinn P."/>
            <person name="Palm C.J."/>
            <person name="Southwick A.M."/>
            <person name="Wu H.C."/>
            <person name="Kim C.J."/>
            <person name="Nguyen M."/>
            <person name="Pham P.K."/>
            <person name="Cheuk R.F."/>
            <person name="Karlin-Newmann G."/>
            <person name="Liu S.X."/>
            <person name="Lam B."/>
            <person name="Sakano H."/>
            <person name="Wu T."/>
            <person name="Yu G."/>
            <person name="Miranda M."/>
            <person name="Quach H.L."/>
            <person name="Tripp M."/>
            <person name="Chang C.H."/>
            <person name="Lee J.M."/>
            <person name="Toriumi M.J."/>
            <person name="Chan M.M."/>
            <person name="Tang C.C."/>
            <person name="Onodera C.S."/>
            <person name="Deng J.M."/>
            <person name="Akiyama K."/>
            <person name="Ansari Y."/>
            <person name="Arakawa T."/>
            <person name="Banh J."/>
            <person name="Banno F."/>
            <person name="Bowser L."/>
            <person name="Brooks S.Y."/>
            <person name="Carninci P."/>
            <person name="Chao Q."/>
            <person name="Choy N."/>
            <person name="Enju A."/>
            <person name="Goldsmith A.D."/>
            <person name="Gurjal M."/>
            <person name="Hansen N.F."/>
            <person name="Hayashizaki Y."/>
            <person name="Johnson-Hopson C."/>
            <person name="Hsuan V.W."/>
            <person name="Iida K."/>
            <person name="Karnes M."/>
            <person name="Khan S."/>
            <person name="Koesema E."/>
            <person name="Ishida J."/>
            <person name="Jiang P.X."/>
            <person name="Jones T."/>
            <person name="Kawai J."/>
            <person name="Kamiya A."/>
            <person name="Meyers C."/>
            <person name="Nakajima M."/>
            <person name="Narusaka M."/>
            <person name="Seki M."/>
            <person name="Sakurai T."/>
            <person name="Satou M."/>
            <person name="Tamse R."/>
            <person name="Vaysberg M."/>
            <person name="Wallender E.K."/>
            <person name="Wong C."/>
            <person name="Yamamura Y."/>
            <person name="Yuan S."/>
            <person name="Shinozaki K."/>
            <person name="Davis R.W."/>
            <person name="Theologis A."/>
            <person name="Ecker J.R."/>
        </authorList>
    </citation>
    <scope>NUCLEOTIDE SEQUENCE [LARGE SCALE MRNA]</scope>
    <source>
        <strain>cv. Columbia</strain>
    </source>
</reference>
<name>RPKL_ARATH</name>
<comment type="subcellular location">
    <subcellularLocation>
        <location evidence="6">Membrane</location>
        <topology evidence="6">Single-pass membrane protein</topology>
    </subcellularLocation>
</comment>
<comment type="domain">
    <text>The protein kinase domain is predicted to be catalytically inactive.</text>
</comment>
<comment type="similarity">
    <text evidence="6">Belongs to the protein kinase superfamily.</text>
</comment>
<comment type="sequence caution" evidence="6">
    <conflict type="erroneous gene model prediction">
        <sequence resource="EMBL-CDS" id="CAA17550"/>
    </conflict>
    <text>The predicted gene At4g34220 has been split into 2 genes: At4g34215 and At4g34220.</text>
</comment>
<comment type="sequence caution" evidence="6">
    <conflict type="erroneous gene model prediction">
        <sequence resource="EMBL-CDS" id="CAB80139"/>
    </conflict>
    <text>The predicted gene At4g34220 has been split into 2 genes: At4g34215 and At4g34220.</text>
</comment>